<feature type="chain" id="PRO_0000142340" description="Aspartate carbamoyltransferase regulatory chain">
    <location>
        <begin position="1"/>
        <end position="152"/>
    </location>
</feature>
<feature type="binding site" evidence="1">
    <location>
        <position position="108"/>
    </location>
    <ligand>
        <name>Zn(2+)</name>
        <dbReference type="ChEBI" id="CHEBI:29105"/>
    </ligand>
</feature>
<feature type="binding site" evidence="1">
    <location>
        <position position="113"/>
    </location>
    <ligand>
        <name>Zn(2+)</name>
        <dbReference type="ChEBI" id="CHEBI:29105"/>
    </ligand>
</feature>
<feature type="binding site" evidence="1">
    <location>
        <position position="136"/>
    </location>
    <ligand>
        <name>Zn(2+)</name>
        <dbReference type="ChEBI" id="CHEBI:29105"/>
    </ligand>
</feature>
<feature type="binding site" evidence="1">
    <location>
        <position position="139"/>
    </location>
    <ligand>
        <name>Zn(2+)</name>
        <dbReference type="ChEBI" id="CHEBI:29105"/>
    </ligand>
</feature>
<reference key="1">
    <citation type="journal article" date="1998" name="DNA Res.">
        <title>Complete sequence and gene organization of the genome of a hyper-thermophilic archaebacterium, Pyrococcus horikoshii OT3.</title>
        <authorList>
            <person name="Kawarabayasi Y."/>
            <person name="Sawada M."/>
            <person name="Horikawa H."/>
            <person name="Haikawa Y."/>
            <person name="Hino Y."/>
            <person name="Yamamoto S."/>
            <person name="Sekine M."/>
            <person name="Baba S."/>
            <person name="Kosugi H."/>
            <person name="Hosoyama A."/>
            <person name="Nagai Y."/>
            <person name="Sakai M."/>
            <person name="Ogura K."/>
            <person name="Otsuka R."/>
            <person name="Nakazawa H."/>
            <person name="Takamiya M."/>
            <person name="Ohfuku Y."/>
            <person name="Funahashi T."/>
            <person name="Tanaka T."/>
            <person name="Kudoh Y."/>
            <person name="Yamazaki J."/>
            <person name="Kushida N."/>
            <person name="Oguchi A."/>
            <person name="Aoki K."/>
            <person name="Yoshizawa T."/>
            <person name="Nakamura Y."/>
            <person name="Robb F.T."/>
            <person name="Horikoshi K."/>
            <person name="Masuchi Y."/>
            <person name="Shizuya H."/>
            <person name="Kikuchi H."/>
        </authorList>
    </citation>
    <scope>NUCLEOTIDE SEQUENCE [LARGE SCALE GENOMIC DNA]</scope>
    <source>
        <strain>ATCC 700860 / DSM 12428 / JCM 9974 / NBRC 100139 / OT-3</strain>
    </source>
</reference>
<evidence type="ECO:0000250" key="1"/>
<evidence type="ECO:0000305" key="2"/>
<comment type="function">
    <text evidence="1">Involved in allosteric regulation of aspartate carbamoyltransferase.</text>
</comment>
<comment type="cofactor">
    <cofactor evidence="1">
        <name>Zn(2+)</name>
        <dbReference type="ChEBI" id="CHEBI:29105"/>
    </cofactor>
    <text evidence="1">Binds 1 zinc ion per subunit.</text>
</comment>
<comment type="subunit">
    <text evidence="1">Contains catalytic and regulatory chains.</text>
</comment>
<comment type="similarity">
    <text evidence="2">Belongs to the PyrI family.</text>
</comment>
<name>PYRI_PYRHO</name>
<keyword id="KW-0479">Metal-binding</keyword>
<keyword id="KW-0665">Pyrimidine biosynthesis</keyword>
<keyword id="KW-0862">Zinc</keyword>
<proteinExistence type="inferred from homology"/>
<protein>
    <recommendedName>
        <fullName>Aspartate carbamoyltransferase regulatory chain</fullName>
    </recommendedName>
</protein>
<gene>
    <name type="primary">pyrI</name>
    <name type="ordered locus">PH0721</name>
</gene>
<dbReference type="EMBL" id="BA000001">
    <property type="protein sequence ID" value="BAA29812.1"/>
    <property type="molecule type" value="Genomic_DNA"/>
</dbReference>
<dbReference type="PIR" id="B71119">
    <property type="entry name" value="B71119"/>
</dbReference>
<dbReference type="RefSeq" id="WP_010884819.1">
    <property type="nucleotide sequence ID" value="NC_000961.1"/>
</dbReference>
<dbReference type="SMR" id="O58452"/>
<dbReference type="STRING" id="70601.gene:9377668"/>
<dbReference type="EnsemblBacteria" id="BAA29812">
    <property type="protein sequence ID" value="BAA29812"/>
    <property type="gene ID" value="BAA29812"/>
</dbReference>
<dbReference type="GeneID" id="1443054"/>
<dbReference type="KEGG" id="pho:PH0721"/>
<dbReference type="eggNOG" id="arCOG04229">
    <property type="taxonomic scope" value="Archaea"/>
</dbReference>
<dbReference type="OrthoDB" id="7000at2157"/>
<dbReference type="Proteomes" id="UP000000752">
    <property type="component" value="Chromosome"/>
</dbReference>
<dbReference type="GO" id="GO:0009347">
    <property type="term" value="C:aspartate carbamoyltransferase complex"/>
    <property type="evidence" value="ECO:0007669"/>
    <property type="project" value="InterPro"/>
</dbReference>
<dbReference type="GO" id="GO:0046872">
    <property type="term" value="F:metal ion binding"/>
    <property type="evidence" value="ECO:0007669"/>
    <property type="project" value="UniProtKB-KW"/>
</dbReference>
<dbReference type="GO" id="GO:0006207">
    <property type="term" value="P:'de novo' pyrimidine nucleobase biosynthetic process"/>
    <property type="evidence" value="ECO:0007669"/>
    <property type="project" value="InterPro"/>
</dbReference>
<dbReference type="GO" id="GO:0006221">
    <property type="term" value="P:pyrimidine nucleotide biosynthetic process"/>
    <property type="evidence" value="ECO:0007669"/>
    <property type="project" value="UniProtKB-UniRule"/>
</dbReference>
<dbReference type="Gene3D" id="2.30.30.20">
    <property type="entry name" value="Aspartate carbamoyltransferase regulatory subunit, C-terminal domain"/>
    <property type="match status" value="1"/>
</dbReference>
<dbReference type="Gene3D" id="3.30.70.140">
    <property type="entry name" value="Aspartate carbamoyltransferase regulatory subunit, N-terminal domain"/>
    <property type="match status" value="1"/>
</dbReference>
<dbReference type="HAMAP" id="MF_00002">
    <property type="entry name" value="Asp_carb_tr_reg"/>
    <property type="match status" value="1"/>
</dbReference>
<dbReference type="InterPro" id="IPR020545">
    <property type="entry name" value="Asp_carbamoyltransf_reg_N"/>
</dbReference>
<dbReference type="InterPro" id="IPR002801">
    <property type="entry name" value="Asp_carbamoylTrfase_reg"/>
</dbReference>
<dbReference type="InterPro" id="IPR020542">
    <property type="entry name" value="Asp_carbamoyltrfase_reg_C"/>
</dbReference>
<dbReference type="InterPro" id="IPR036792">
    <property type="entry name" value="Asp_carbatrfase_reg_C_sf"/>
</dbReference>
<dbReference type="InterPro" id="IPR036793">
    <property type="entry name" value="Asp_carbatrfase_reg_N_sf"/>
</dbReference>
<dbReference type="NCBIfam" id="TIGR00240">
    <property type="entry name" value="ATCase_reg"/>
    <property type="match status" value="1"/>
</dbReference>
<dbReference type="PANTHER" id="PTHR35805">
    <property type="entry name" value="ASPARTATE CARBAMOYLTRANSFERASE REGULATORY CHAIN"/>
    <property type="match status" value="1"/>
</dbReference>
<dbReference type="PANTHER" id="PTHR35805:SF1">
    <property type="entry name" value="ASPARTATE CARBAMOYLTRANSFERASE REGULATORY CHAIN"/>
    <property type="match status" value="1"/>
</dbReference>
<dbReference type="Pfam" id="PF01948">
    <property type="entry name" value="PyrI"/>
    <property type="match status" value="1"/>
</dbReference>
<dbReference type="Pfam" id="PF02748">
    <property type="entry name" value="PyrI_C"/>
    <property type="match status" value="1"/>
</dbReference>
<dbReference type="SUPFAM" id="SSF57825">
    <property type="entry name" value="Aspartate carbamoyltransferase, Regulatory-chain, C-terminal domain"/>
    <property type="match status" value="1"/>
</dbReference>
<dbReference type="SUPFAM" id="SSF54893">
    <property type="entry name" value="Aspartate carbamoyltransferase, Regulatory-chain, N-terminal domain"/>
    <property type="match status" value="1"/>
</dbReference>
<organism>
    <name type="scientific">Pyrococcus horikoshii (strain ATCC 700860 / DSM 12428 / JCM 9974 / NBRC 100139 / OT-3)</name>
    <dbReference type="NCBI Taxonomy" id="70601"/>
    <lineage>
        <taxon>Archaea</taxon>
        <taxon>Methanobacteriati</taxon>
        <taxon>Methanobacteriota</taxon>
        <taxon>Thermococci</taxon>
        <taxon>Thermococcales</taxon>
        <taxon>Thermococcaceae</taxon>
        <taxon>Pyrococcus</taxon>
    </lineage>
</organism>
<sequence length="152" mass="16872">MPELKVSAIKEGTVIDHIPAGKGLKVIEILGLSKLSNGGSVLLAMNVPSKKLGRKDIVKVEGKFLSEEEVNKIALVAPTATVNIIRNYKVVEKFKVEVPEVIEGILKCGNPNCITNYEYVTTKFYVISKNPLKVRCHYCERTMEEEEILANL</sequence>
<accession>O58452</accession>